<reference key="1">
    <citation type="submission" date="1992-12" db="EMBL/GenBank/DDBJ databases">
        <title>Molecular cloning of the abundant rhodopsin and transducin from Xenopus laevis.</title>
        <authorList>
            <person name="Knox B.E."/>
            <person name="Scalzetti L.C."/>
            <person name="Batni S."/>
            <person name="Wang J.Q."/>
        </authorList>
    </citation>
    <scope>NUCLEOTIDE SEQUENCE [MRNA]</scope>
</reference>
<reference key="2">
    <citation type="submission" date="2005-12" db="EMBL/GenBank/DDBJ databases">
        <authorList>
            <consortium name="NIH - Xenopus Gene Collection (XGC) project"/>
        </authorList>
    </citation>
    <scope>NUCLEOTIDE SEQUENCE [LARGE SCALE MRNA]</scope>
    <source>
        <tissue>Brain</tissue>
    </source>
</reference>
<sequence>MGAGASAEEKHSRELEKKLKEDADKDARTVKLLLLGAGESGKSTIVKQMKIIHQDGYSVEECLEFIAIIYGNTLQSMIAIVKAMNTLNIQFGDPARQDDARKLMHLADTIDEGSMPKEMSDIIGRLWKDTGIQACFDRASEYQLNDSAGYYLNDLDRLVIPGYVPTEQDVLRSRVKTTGIIETQFGLKDLNFRMFDVGGQRSERKKWIHCFEGVTCIIFIAALSAYDMVLVEDDEVNRMHESLHLFNSICNHRYFATTSIVLFLNKKDVFTEKIKKAHLSICFPDYDGPNTYEDAGNYIKTQFLELNMRRDVKEIYSHMTCATDTENVKFVFDAVTDIIIKENLKDCGLF</sequence>
<accession>P38407</accession>
<accession>Q2T9I4</accession>
<gene>
    <name type="primary">gnat</name>
</gene>
<comment type="function">
    <text>Guanine nucleotide-binding proteins (G proteins) are involved as modulators or transducers in various transmembrane signaling systems. Transducin is an amplifier and one of the transducers of a visual impulse that performs the coupling between rhodopsin and cGMP-phosphodiesterase.</text>
</comment>
<comment type="subunit">
    <text>G proteins are composed of 3 units; alpha, beta and gamma. The alpha chain contains the guanine nucleotide binding site.</text>
</comment>
<comment type="similarity">
    <text evidence="5">Belongs to the G-alpha family. G(i/o/t/z) subfamily.</text>
</comment>
<proteinExistence type="evidence at transcript level"/>
<organism>
    <name type="scientific">Xenopus laevis</name>
    <name type="common">African clawed frog</name>
    <dbReference type="NCBI Taxonomy" id="8355"/>
    <lineage>
        <taxon>Eukaryota</taxon>
        <taxon>Metazoa</taxon>
        <taxon>Chordata</taxon>
        <taxon>Craniata</taxon>
        <taxon>Vertebrata</taxon>
        <taxon>Euteleostomi</taxon>
        <taxon>Amphibia</taxon>
        <taxon>Batrachia</taxon>
        <taxon>Anura</taxon>
        <taxon>Pipoidea</taxon>
        <taxon>Pipidae</taxon>
        <taxon>Xenopodinae</taxon>
        <taxon>Xenopus</taxon>
        <taxon>Xenopus</taxon>
    </lineage>
</organism>
<dbReference type="EMBL" id="L07771">
    <property type="protein sequence ID" value="AAA88693.1"/>
    <property type="molecule type" value="mRNA"/>
</dbReference>
<dbReference type="EMBL" id="BC111509">
    <property type="protein sequence ID" value="AAI11510.1"/>
    <property type="molecule type" value="mRNA"/>
</dbReference>
<dbReference type="RefSeq" id="NP_001084030.1">
    <property type="nucleotide sequence ID" value="NM_001090561.1"/>
</dbReference>
<dbReference type="SMR" id="P38407"/>
<dbReference type="DNASU" id="399262"/>
<dbReference type="GeneID" id="399262"/>
<dbReference type="KEGG" id="xla:399262"/>
<dbReference type="AGR" id="Xenbase:XB-GENE-17343152"/>
<dbReference type="CTD" id="399262"/>
<dbReference type="Xenbase" id="XB-GENE-17343152">
    <property type="gene designation" value="gnat1.L"/>
</dbReference>
<dbReference type="OrthoDB" id="5817230at2759"/>
<dbReference type="Proteomes" id="UP000186698">
    <property type="component" value="Chromosome 4L"/>
</dbReference>
<dbReference type="Bgee" id="399262">
    <property type="expression patterns" value="Expressed in camera-type eye and 8 other cell types or tissues"/>
</dbReference>
<dbReference type="GO" id="GO:0005737">
    <property type="term" value="C:cytoplasm"/>
    <property type="evidence" value="ECO:0000318"/>
    <property type="project" value="GO_Central"/>
</dbReference>
<dbReference type="GO" id="GO:0005834">
    <property type="term" value="C:heterotrimeric G-protein complex"/>
    <property type="evidence" value="ECO:0000318"/>
    <property type="project" value="GO_Central"/>
</dbReference>
<dbReference type="GO" id="GO:0016020">
    <property type="term" value="C:membrane"/>
    <property type="evidence" value="ECO:0000250"/>
    <property type="project" value="AgBase"/>
</dbReference>
<dbReference type="GO" id="GO:0001664">
    <property type="term" value="F:G protein-coupled receptor binding"/>
    <property type="evidence" value="ECO:0000318"/>
    <property type="project" value="GO_Central"/>
</dbReference>
<dbReference type="GO" id="GO:0031683">
    <property type="term" value="F:G-protein beta/gamma-subunit complex binding"/>
    <property type="evidence" value="ECO:0000318"/>
    <property type="project" value="GO_Central"/>
</dbReference>
<dbReference type="GO" id="GO:0005525">
    <property type="term" value="F:GTP binding"/>
    <property type="evidence" value="ECO:0007669"/>
    <property type="project" value="UniProtKB-KW"/>
</dbReference>
<dbReference type="GO" id="GO:0003924">
    <property type="term" value="F:GTPase activity"/>
    <property type="evidence" value="ECO:0000318"/>
    <property type="project" value="GO_Central"/>
</dbReference>
<dbReference type="GO" id="GO:0046872">
    <property type="term" value="F:metal ion binding"/>
    <property type="evidence" value="ECO:0007669"/>
    <property type="project" value="UniProtKB-KW"/>
</dbReference>
<dbReference type="GO" id="GO:0007188">
    <property type="term" value="P:adenylate cyclase-modulating G protein-coupled receptor signaling pathway"/>
    <property type="evidence" value="ECO:0000318"/>
    <property type="project" value="GO_Central"/>
</dbReference>
<dbReference type="GO" id="GO:0050908">
    <property type="term" value="P:detection of light stimulus involved in visual perception"/>
    <property type="evidence" value="ECO:0000318"/>
    <property type="project" value="GO_Central"/>
</dbReference>
<dbReference type="GO" id="GO:0007603">
    <property type="term" value="P:phototransduction, visible light"/>
    <property type="evidence" value="ECO:0000318"/>
    <property type="project" value="GO_Central"/>
</dbReference>
<dbReference type="GO" id="GO:0009416">
    <property type="term" value="P:response to light stimulus"/>
    <property type="evidence" value="ECO:0000250"/>
    <property type="project" value="AgBase"/>
</dbReference>
<dbReference type="CDD" id="cd00066">
    <property type="entry name" value="G-alpha"/>
    <property type="match status" value="1"/>
</dbReference>
<dbReference type="FunFam" id="1.10.400.10:FF:000001">
    <property type="entry name" value="Guanine nucleotide-binding protein G(I) subunit alpha"/>
    <property type="match status" value="1"/>
</dbReference>
<dbReference type="FunFam" id="3.40.50.300:FF:000720">
    <property type="entry name" value="Guanine nucleotide-binding protein G(k) subunit alpha"/>
    <property type="match status" value="1"/>
</dbReference>
<dbReference type="FunFam" id="3.40.50.300:FF:000256">
    <property type="entry name" value="Guanine nucleotide-binding protein G(t) subunit alpha"/>
    <property type="match status" value="1"/>
</dbReference>
<dbReference type="Gene3D" id="1.10.400.10">
    <property type="entry name" value="GI Alpha 1, domain 2-like"/>
    <property type="match status" value="1"/>
</dbReference>
<dbReference type="Gene3D" id="3.40.50.300">
    <property type="entry name" value="P-loop containing nucleotide triphosphate hydrolases"/>
    <property type="match status" value="1"/>
</dbReference>
<dbReference type="InterPro" id="IPR001408">
    <property type="entry name" value="Gprotein_alpha_I"/>
</dbReference>
<dbReference type="InterPro" id="IPR001019">
    <property type="entry name" value="Gprotein_alpha_su"/>
</dbReference>
<dbReference type="InterPro" id="IPR011025">
    <property type="entry name" value="GproteinA_insert"/>
</dbReference>
<dbReference type="InterPro" id="IPR027417">
    <property type="entry name" value="P-loop_NTPase"/>
</dbReference>
<dbReference type="PANTHER" id="PTHR10218">
    <property type="entry name" value="GTP-BINDING PROTEIN ALPHA SUBUNIT"/>
    <property type="match status" value="1"/>
</dbReference>
<dbReference type="PANTHER" id="PTHR10218:SF67">
    <property type="entry name" value="GUANINE NUCLEOTIDE-BINDING PROTEIN G(T) SUBUNIT ALPHA-1"/>
    <property type="match status" value="1"/>
</dbReference>
<dbReference type="Pfam" id="PF00503">
    <property type="entry name" value="G-alpha"/>
    <property type="match status" value="1"/>
</dbReference>
<dbReference type="PRINTS" id="PR00318">
    <property type="entry name" value="GPROTEINA"/>
</dbReference>
<dbReference type="PRINTS" id="PR00441">
    <property type="entry name" value="GPROTEINAI"/>
</dbReference>
<dbReference type="SMART" id="SM00275">
    <property type="entry name" value="G_alpha"/>
    <property type="match status" value="1"/>
</dbReference>
<dbReference type="SUPFAM" id="SSF52540">
    <property type="entry name" value="P-loop containing nucleoside triphosphate hydrolases"/>
    <property type="match status" value="1"/>
</dbReference>
<dbReference type="SUPFAM" id="SSF47895">
    <property type="entry name" value="Transducin (alpha subunit), insertion domain"/>
    <property type="match status" value="1"/>
</dbReference>
<dbReference type="PROSITE" id="PS51882">
    <property type="entry name" value="G_ALPHA"/>
    <property type="match status" value="1"/>
</dbReference>
<protein>
    <recommendedName>
        <fullName>Guanine nucleotide-binding protein G(t) subunit alpha</fullName>
    </recommendedName>
    <alternativeName>
        <fullName>Transducin alpha chain</fullName>
    </alternativeName>
</protein>
<evidence type="ECO:0000250" key="1"/>
<evidence type="ECO:0000255" key="2"/>
<evidence type="ECO:0000255" key="3">
    <source>
        <dbReference type="PROSITE-ProRule" id="PRU01230"/>
    </source>
</evidence>
<evidence type="ECO:0000256" key="4">
    <source>
        <dbReference type="SAM" id="MobiDB-lite"/>
    </source>
</evidence>
<evidence type="ECO:0000305" key="5"/>
<name>GNAT_XENLA</name>
<feature type="initiator methionine" description="Removed" evidence="1">
    <location>
        <position position="1"/>
    </location>
</feature>
<feature type="chain" id="PRO_0000203742" description="Guanine nucleotide-binding protein G(t) subunit alpha">
    <location>
        <begin position="2"/>
        <end position="350"/>
    </location>
</feature>
<feature type="domain" description="G-alpha" evidence="3">
    <location>
        <begin position="28"/>
        <end position="350"/>
    </location>
</feature>
<feature type="region of interest" description="Disordered" evidence="4">
    <location>
        <begin position="1"/>
        <end position="21"/>
    </location>
</feature>
<feature type="region of interest" description="G1 motif" evidence="3">
    <location>
        <begin position="31"/>
        <end position="44"/>
    </location>
</feature>
<feature type="region of interest" description="G2 motif" evidence="3">
    <location>
        <begin position="169"/>
        <end position="177"/>
    </location>
</feature>
<feature type="region of interest" description="G3 motif" evidence="3">
    <location>
        <begin position="192"/>
        <end position="201"/>
    </location>
</feature>
<feature type="region of interest" description="G4 motif" evidence="3">
    <location>
        <begin position="261"/>
        <end position="268"/>
    </location>
</feature>
<feature type="region of interest" description="G5 motif" evidence="3">
    <location>
        <begin position="320"/>
        <end position="325"/>
    </location>
</feature>
<feature type="compositionally biased region" description="Basic and acidic residues" evidence="4">
    <location>
        <begin position="7"/>
        <end position="21"/>
    </location>
</feature>
<feature type="binding site" evidence="1">
    <location>
        <begin position="36"/>
        <end position="43"/>
    </location>
    <ligand>
        <name>GTP</name>
        <dbReference type="ChEBI" id="CHEBI:37565"/>
    </ligand>
</feature>
<feature type="binding site" evidence="1">
    <location>
        <position position="43"/>
    </location>
    <ligand>
        <name>Mg(2+)</name>
        <dbReference type="ChEBI" id="CHEBI:18420"/>
    </ligand>
</feature>
<feature type="binding site" evidence="1">
    <location>
        <begin position="171"/>
        <end position="177"/>
    </location>
    <ligand>
        <name>GTP</name>
        <dbReference type="ChEBI" id="CHEBI:37565"/>
    </ligand>
</feature>
<feature type="binding site" evidence="1">
    <location>
        <position position="177"/>
    </location>
    <ligand>
        <name>Mg(2+)</name>
        <dbReference type="ChEBI" id="CHEBI:18420"/>
    </ligand>
</feature>
<feature type="binding site" evidence="1">
    <location>
        <begin position="196"/>
        <end position="200"/>
    </location>
    <ligand>
        <name>GTP</name>
        <dbReference type="ChEBI" id="CHEBI:37565"/>
    </ligand>
</feature>
<feature type="binding site" evidence="1">
    <location>
        <begin position="265"/>
        <end position="268"/>
    </location>
    <ligand>
        <name>GTP</name>
        <dbReference type="ChEBI" id="CHEBI:37565"/>
    </ligand>
</feature>
<feature type="binding site" evidence="1">
    <location>
        <position position="322"/>
    </location>
    <ligand>
        <name>GTP</name>
        <dbReference type="ChEBI" id="CHEBI:37565"/>
    </ligand>
</feature>
<feature type="lipid moiety-binding region" description="N-myristoyl glycine" evidence="2">
    <location>
        <position position="2"/>
    </location>
</feature>
<keyword id="KW-0342">GTP-binding</keyword>
<keyword id="KW-0449">Lipoprotein</keyword>
<keyword id="KW-0460">Magnesium</keyword>
<keyword id="KW-0479">Metal-binding</keyword>
<keyword id="KW-0519">Myristate</keyword>
<keyword id="KW-0547">Nucleotide-binding</keyword>
<keyword id="KW-1185">Reference proteome</keyword>
<keyword id="KW-0716">Sensory transduction</keyword>
<keyword id="KW-0807">Transducer</keyword>
<keyword id="KW-0844">Vision</keyword>